<comment type="function">
    <text evidence="3">Probable transcriptional regulator, which participates in the transcriptional repression of the presenilin protein hop-1.</text>
</comment>
<comment type="subcellular location">
    <subcellularLocation>
        <location evidence="3">Nucleus</location>
    </subcellularLocation>
</comment>
<comment type="alternative products">
    <event type="alternative splicing"/>
    <isoform>
        <id>Q17768-1</id>
        <name>a</name>
        <sequence type="displayed"/>
    </isoform>
    <isoform>
        <id>Q17768-2</id>
        <name>b</name>
        <sequence type="described" ref="VSP_012009"/>
    </isoform>
</comment>
<comment type="developmental stage">
    <text evidence="3">Expressed in eggs, L2 stage and in adult. Expressed at lower level in L1, L3 and L4 stages.</text>
</comment>
<comment type="disruption phenotype">
    <text evidence="3">Loss of function results in a suppression of sel-12 mutant phenotypes, possibly by up-regulating hop-1 expression.</text>
</comment>
<protein>
    <recommendedName>
        <fullName>Suppressor of presenilin protein 3</fullName>
    </recommendedName>
</protein>
<keyword id="KW-0025">Alternative splicing</keyword>
<keyword id="KW-0238">DNA-binding</keyword>
<keyword id="KW-0479">Metal-binding</keyword>
<keyword id="KW-0539">Nucleus</keyword>
<keyword id="KW-1185">Reference proteome</keyword>
<keyword id="KW-0677">Repeat</keyword>
<keyword id="KW-0678">Repressor</keyword>
<keyword id="KW-0804">Transcription</keyword>
<keyword id="KW-0805">Transcription regulation</keyword>
<keyword id="KW-0862">Zinc</keyword>
<keyword id="KW-0863">Zinc-finger</keyword>
<gene>
    <name type="primary">spr-3</name>
    <name type="ORF">C07A12.5</name>
</gene>
<organism>
    <name type="scientific">Caenorhabditis elegans</name>
    <dbReference type="NCBI Taxonomy" id="6239"/>
    <lineage>
        <taxon>Eukaryota</taxon>
        <taxon>Metazoa</taxon>
        <taxon>Ecdysozoa</taxon>
        <taxon>Nematoda</taxon>
        <taxon>Chromadorea</taxon>
        <taxon>Rhabditida</taxon>
        <taxon>Rhabditina</taxon>
        <taxon>Rhabditomorpha</taxon>
        <taxon>Rhabditoidea</taxon>
        <taxon>Rhabditidae</taxon>
        <taxon>Peloderinae</taxon>
        <taxon>Caenorhabditis</taxon>
    </lineage>
</organism>
<feature type="chain" id="PRO_0000046892" description="Suppressor of presenilin protein 3">
    <location>
        <begin position="1"/>
        <end position="684"/>
    </location>
</feature>
<feature type="zinc finger region" description="C2H2-type 1" evidence="1">
    <location>
        <begin position="21"/>
        <end position="43"/>
    </location>
</feature>
<feature type="zinc finger region" description="C2H2-type 2" evidence="1">
    <location>
        <begin position="48"/>
        <end position="71"/>
    </location>
</feature>
<feature type="zinc finger region" description="C2H2-type 3" evidence="1">
    <location>
        <begin position="123"/>
        <end position="145"/>
    </location>
</feature>
<feature type="zinc finger region" description="C2H2-type 4" evidence="1">
    <location>
        <begin position="261"/>
        <end position="283"/>
    </location>
</feature>
<feature type="zinc finger region" description="C2H2-type 5" evidence="1">
    <location>
        <begin position="291"/>
        <end position="313"/>
    </location>
</feature>
<feature type="zinc finger region" description="C2H2-type 6" evidence="1">
    <location>
        <begin position="590"/>
        <end position="612"/>
    </location>
</feature>
<feature type="zinc finger region" description="C2H2-type 7" evidence="1">
    <location>
        <begin position="618"/>
        <end position="641"/>
    </location>
</feature>
<feature type="region of interest" description="Disordered" evidence="2">
    <location>
        <begin position="337"/>
        <end position="359"/>
    </location>
</feature>
<feature type="region of interest" description="Disordered" evidence="2">
    <location>
        <begin position="419"/>
        <end position="440"/>
    </location>
</feature>
<feature type="region of interest" description="Disordered" evidence="2">
    <location>
        <begin position="469"/>
        <end position="501"/>
    </location>
</feature>
<feature type="region of interest" description="Disordered" evidence="2">
    <location>
        <begin position="652"/>
        <end position="684"/>
    </location>
</feature>
<feature type="compositionally biased region" description="Basic residues" evidence="2">
    <location>
        <begin position="671"/>
        <end position="684"/>
    </location>
</feature>
<feature type="splice variant" id="VSP_012009" description="In isoform b." evidence="4">
    <original>SKSDTQIALSVKQSSSMKMVKVSPGKVYQLPKTSKFYRPESPDSLASNNSAHGDEIESTSSD</original>
    <variation>N</variation>
    <location>
        <begin position="437"/>
        <end position="498"/>
    </location>
</feature>
<reference key="1">
    <citation type="journal article" date="2003" name="Development">
        <title>Two suppressors of sel-12 encode C2H2 zinc-finger proteins that regulate presenilin transcription in Caenorhabditis elegans.</title>
        <authorList>
            <person name="Lakowski B."/>
            <person name="Eimer S."/>
            <person name="Goebel C."/>
            <person name="Boettcher A."/>
            <person name="Wagler B."/>
            <person name="Baumeister R."/>
        </authorList>
    </citation>
    <scope>NUCLEOTIDE SEQUENCE [GENOMIC DNA] (ISOFORM A)</scope>
    <scope>FUNCTION</scope>
    <scope>SUBCELLULAR LOCATION</scope>
    <scope>DEVELOPMENTAL STAGE</scope>
    <scope>DISRUPTION PHENOTYPE</scope>
</reference>
<reference key="2">
    <citation type="journal article" date="1998" name="Science">
        <title>Genome sequence of the nematode C. elegans: a platform for investigating biology.</title>
        <authorList>
            <consortium name="The C. elegans sequencing consortium"/>
        </authorList>
    </citation>
    <scope>NUCLEOTIDE SEQUENCE [LARGE SCALE GENOMIC DNA]</scope>
    <scope>ALTERNATIVE SPLICING</scope>
    <source>
        <strain>Bristol N2</strain>
    </source>
</reference>
<evidence type="ECO:0000255" key="1">
    <source>
        <dbReference type="PROSITE-ProRule" id="PRU00042"/>
    </source>
</evidence>
<evidence type="ECO:0000256" key="2">
    <source>
        <dbReference type="SAM" id="MobiDB-lite"/>
    </source>
</evidence>
<evidence type="ECO:0000269" key="3">
    <source>
    </source>
</evidence>
<evidence type="ECO:0000305" key="4"/>
<proteinExistence type="evidence at transcript level"/>
<sequence>MPPRKRKLEELKNEQGEQGSYKCHLCGQCFYRGCGLASHLRRHAPVTFDCEHCAYTCKHKYAYDRHLLQSHPELVESGPLVRMFKNEDEDAPMPILEREADVSDDAVKYEALSSFSEPEPISYKCPLCISTFGSHARAVYHILSHRVKLYQAPKSLKFFSRKTMQALGGFRLESQLMIKWRLQYDNRSVDEKRTRLWRYMEENFGHEHLKQPKLESDNPSTSSSFESQTNLNDSSIIKKKLVMKCGTVFGQRLIHDNTQYYLCRNCPYVSWNVSSLWRHFRHHIQKSKQSWTCIACSYSSSSRVKIDLHVKMHKEMPEIDLEFATWLRYERRINKNDLNKPTNKKKKPDGGNGSNHSDMRSLHAFLSLKNSKNNVVKHDIDAPTLHPLSPAPKLVAMTQFDFGEIVTYKSVNPLHQINKNNSNPTVLPNKRNSIKTSKSDTQIALSVKQSSSMKMVKVSPGKVYQLPKTSKFYRPESPDSLASNNSAHGDEIESTSSDQFQQSVKVPKYEDFLNMKPVMPYFQKQRHPLEAIAMYEKAKREYEKNHCFPNLPIFEFNIEYKNLHPLAKAQYGKNNMKEYFLNEMEVEKSRECTDCPFKHNDLQQFRLHRDKHFYGGSHTCPECNYSSNNHNQVVEHTFVDHYLSDVRLVEGLPSSDSEDDNIPVPPDTPQRKKKAPKRGKRRGW</sequence>
<accession>Q17768</accession>
<accession>Q7JP33</accession>
<name>SPR3_CAEEL</name>
<dbReference type="EMBL" id="FO080373">
    <property type="protein sequence ID" value="CCD63278.1"/>
    <property type="molecule type" value="Genomic_DNA"/>
</dbReference>
<dbReference type="EMBL" id="FO080373">
    <property type="protein sequence ID" value="CCD63279.1"/>
    <property type="molecule type" value="Genomic_DNA"/>
</dbReference>
<dbReference type="RefSeq" id="NP_001024367.1">
    <molecule id="Q17768-1"/>
    <property type="nucleotide sequence ID" value="NM_001029196.5"/>
</dbReference>
<dbReference type="RefSeq" id="NP_001024368.1">
    <property type="nucleotide sequence ID" value="NM_001029197.3"/>
</dbReference>
<dbReference type="BioGRID" id="45657">
    <property type="interactions" value="1"/>
</dbReference>
<dbReference type="FunCoup" id="Q17768">
    <property type="interactions" value="1229"/>
</dbReference>
<dbReference type="STRING" id="6239.C07A12.5a.1"/>
<dbReference type="iPTMnet" id="Q17768"/>
<dbReference type="PaxDb" id="6239-C07A12.5a"/>
<dbReference type="PeptideAtlas" id="Q17768"/>
<dbReference type="EnsemblMetazoa" id="C07A12.5a.1">
    <molecule id="Q17768-1"/>
    <property type="protein sequence ID" value="C07A12.5a.1"/>
    <property type="gene ID" value="WBGene00005008"/>
</dbReference>
<dbReference type="EnsemblMetazoa" id="C07A12.5b.1">
    <property type="protein sequence ID" value="C07A12.5b.1"/>
    <property type="gene ID" value="WBGene00005008"/>
</dbReference>
<dbReference type="GeneID" id="180722"/>
<dbReference type="KEGG" id="cel:CELE_C07A12.5"/>
<dbReference type="UCSC" id="C07A12.5b">
    <molecule id="Q17768-1"/>
    <property type="organism name" value="c. elegans"/>
</dbReference>
<dbReference type="AGR" id="WB:WBGene00005008"/>
<dbReference type="CTD" id="180722"/>
<dbReference type="WormBase" id="C07A12.5a">
    <molecule id="Q17768-1"/>
    <property type="protein sequence ID" value="CE36266"/>
    <property type="gene ID" value="WBGene00005008"/>
    <property type="gene designation" value="spr-3"/>
</dbReference>
<dbReference type="WormBase" id="C07A12.5b">
    <molecule id="Q17768-2"/>
    <property type="protein sequence ID" value="CE36267"/>
    <property type="gene ID" value="WBGene00005008"/>
    <property type="gene designation" value="spr-3"/>
</dbReference>
<dbReference type="eggNOG" id="KOG1721">
    <property type="taxonomic scope" value="Eukaryota"/>
</dbReference>
<dbReference type="GeneTree" id="ENSGT00970000196069"/>
<dbReference type="InParanoid" id="Q17768"/>
<dbReference type="OMA" id="LHRDRHY"/>
<dbReference type="OrthoDB" id="10622907at2759"/>
<dbReference type="PhylomeDB" id="Q17768"/>
<dbReference type="PRO" id="PR:Q17768"/>
<dbReference type="Proteomes" id="UP000001940">
    <property type="component" value="Chromosome X"/>
</dbReference>
<dbReference type="Bgee" id="WBGene00005008">
    <property type="expression patterns" value="Expressed in pharyngeal muscle cell (C elegans) and 4 other cell types or tissues"/>
</dbReference>
<dbReference type="GO" id="GO:0005634">
    <property type="term" value="C:nucleus"/>
    <property type="evidence" value="ECO:0000318"/>
    <property type="project" value="GO_Central"/>
</dbReference>
<dbReference type="GO" id="GO:0003677">
    <property type="term" value="F:DNA binding"/>
    <property type="evidence" value="ECO:0007669"/>
    <property type="project" value="UniProtKB-KW"/>
</dbReference>
<dbReference type="GO" id="GO:0008270">
    <property type="term" value="F:zinc ion binding"/>
    <property type="evidence" value="ECO:0007669"/>
    <property type="project" value="UniProtKB-KW"/>
</dbReference>
<dbReference type="GO" id="GO:0045944">
    <property type="term" value="P:positive regulation of transcription by RNA polymerase II"/>
    <property type="evidence" value="ECO:0000318"/>
    <property type="project" value="GO_Central"/>
</dbReference>
<dbReference type="FunFam" id="3.30.160.60:FF:004131">
    <property type="match status" value="1"/>
</dbReference>
<dbReference type="Gene3D" id="3.30.160.60">
    <property type="entry name" value="Classic Zinc Finger"/>
    <property type="match status" value="2"/>
</dbReference>
<dbReference type="InterPro" id="IPR050331">
    <property type="entry name" value="Zinc_finger"/>
</dbReference>
<dbReference type="InterPro" id="IPR013087">
    <property type="entry name" value="Znf_C2H2_type"/>
</dbReference>
<dbReference type="PANTHER" id="PTHR16515">
    <property type="entry name" value="PR DOMAIN ZINC FINGER PROTEIN"/>
    <property type="match status" value="1"/>
</dbReference>
<dbReference type="PANTHER" id="PTHR16515:SF57">
    <property type="entry name" value="ZINC FINGER PROTEIN 154-LIKE"/>
    <property type="match status" value="1"/>
</dbReference>
<dbReference type="SMART" id="SM00355">
    <property type="entry name" value="ZnF_C2H2"/>
    <property type="match status" value="7"/>
</dbReference>
<dbReference type="PROSITE" id="PS00028">
    <property type="entry name" value="ZINC_FINGER_C2H2_1"/>
    <property type="match status" value="3"/>
</dbReference>
<dbReference type="PROSITE" id="PS50157">
    <property type="entry name" value="ZINC_FINGER_C2H2_2"/>
    <property type="match status" value="1"/>
</dbReference>